<protein>
    <recommendedName>
        <fullName evidence="1">UPF0502 protein azo0627</fullName>
    </recommendedName>
</protein>
<gene>
    <name type="ordered locus">azo0627</name>
</gene>
<reference key="1">
    <citation type="journal article" date="2006" name="Nat. Biotechnol.">
        <title>Complete genome of the mutualistic, N2-fixing grass endophyte Azoarcus sp. strain BH72.</title>
        <authorList>
            <person name="Krause A."/>
            <person name="Ramakumar A."/>
            <person name="Bartels D."/>
            <person name="Battistoni F."/>
            <person name="Bekel T."/>
            <person name="Boch J."/>
            <person name="Boehm M."/>
            <person name="Friedrich F."/>
            <person name="Hurek T."/>
            <person name="Krause L."/>
            <person name="Linke B."/>
            <person name="McHardy A.C."/>
            <person name="Sarkar A."/>
            <person name="Schneiker S."/>
            <person name="Syed A.A."/>
            <person name="Thauer R."/>
            <person name="Vorhoelter F.-J."/>
            <person name="Weidner S."/>
            <person name="Puehler A."/>
            <person name="Reinhold-Hurek B."/>
            <person name="Kaiser O."/>
            <person name="Goesmann A."/>
        </authorList>
    </citation>
    <scope>NUCLEOTIDE SEQUENCE [LARGE SCALE GENOMIC DNA]</scope>
    <source>
        <strain>BH72</strain>
    </source>
</reference>
<evidence type="ECO:0000255" key="1">
    <source>
        <dbReference type="HAMAP-Rule" id="MF_01584"/>
    </source>
</evidence>
<comment type="similarity">
    <text evidence="1">Belongs to the UPF0502 family.</text>
</comment>
<dbReference type="EMBL" id="AM406670">
    <property type="protein sequence ID" value="CAL93244.1"/>
    <property type="molecule type" value="Genomic_DNA"/>
</dbReference>
<dbReference type="RefSeq" id="WP_011764362.1">
    <property type="nucleotide sequence ID" value="NC_008702.1"/>
</dbReference>
<dbReference type="SMR" id="A1K339"/>
<dbReference type="STRING" id="62928.azo0627"/>
<dbReference type="KEGG" id="aoa:dqs_0696"/>
<dbReference type="KEGG" id="azo:azo0627"/>
<dbReference type="eggNOG" id="COG3132">
    <property type="taxonomic scope" value="Bacteria"/>
</dbReference>
<dbReference type="HOGENOM" id="CLU_057831_1_0_4"/>
<dbReference type="OrthoDB" id="9784785at2"/>
<dbReference type="Proteomes" id="UP000002588">
    <property type="component" value="Chromosome"/>
</dbReference>
<dbReference type="Gene3D" id="1.10.10.10">
    <property type="entry name" value="Winged helix-like DNA-binding domain superfamily/Winged helix DNA-binding domain"/>
    <property type="match status" value="2"/>
</dbReference>
<dbReference type="HAMAP" id="MF_01584">
    <property type="entry name" value="UPF0502"/>
    <property type="match status" value="1"/>
</dbReference>
<dbReference type="InterPro" id="IPR007432">
    <property type="entry name" value="DUF480"/>
</dbReference>
<dbReference type="InterPro" id="IPR036388">
    <property type="entry name" value="WH-like_DNA-bd_sf"/>
</dbReference>
<dbReference type="InterPro" id="IPR036390">
    <property type="entry name" value="WH_DNA-bd_sf"/>
</dbReference>
<dbReference type="PANTHER" id="PTHR38768">
    <property type="entry name" value="UPF0502 PROTEIN YCEH"/>
    <property type="match status" value="1"/>
</dbReference>
<dbReference type="PANTHER" id="PTHR38768:SF1">
    <property type="entry name" value="UPF0502 PROTEIN YCEH"/>
    <property type="match status" value="1"/>
</dbReference>
<dbReference type="Pfam" id="PF04337">
    <property type="entry name" value="DUF480"/>
    <property type="match status" value="1"/>
</dbReference>
<dbReference type="SUPFAM" id="SSF46785">
    <property type="entry name" value="Winged helix' DNA-binding domain"/>
    <property type="match status" value="2"/>
</dbReference>
<feature type="chain" id="PRO_0000309370" description="UPF0502 protein azo0627">
    <location>
        <begin position="1"/>
        <end position="226"/>
    </location>
</feature>
<sequence length="226" mass="24429">MDTTPAAPDASFDLDPAEIRVLGVLVEKAFLTPDAYPLSVNALVAGCNQLTAREPVMALSEGEVQAAIDSLLARRLVSRRDQAGGRVAKYEHQLRLRHSLPPAEQAVLALLMLRGPQTPGELRSRSERMHRFDDIAAVEAVLEHLGEKYPPMAAALPRAPGTKEIRHMHLLGGAEALEAAAEGLASAAAGGTGRGRLAELEEEVQRLRSEVAELRAAFDTFRQQFD</sequence>
<accession>A1K339</accession>
<organism>
    <name type="scientific">Azoarcus sp. (strain BH72)</name>
    <dbReference type="NCBI Taxonomy" id="418699"/>
    <lineage>
        <taxon>Bacteria</taxon>
        <taxon>Pseudomonadati</taxon>
        <taxon>Pseudomonadota</taxon>
        <taxon>Betaproteobacteria</taxon>
        <taxon>Rhodocyclales</taxon>
        <taxon>Zoogloeaceae</taxon>
        <taxon>Azoarcus</taxon>
    </lineage>
</organism>
<keyword id="KW-1185">Reference proteome</keyword>
<name>Y627_AZOSB</name>
<proteinExistence type="inferred from homology"/>